<dbReference type="EC" id="3.5.1.88" evidence="1"/>
<dbReference type="EMBL" id="AE007317">
    <property type="protein sequence ID" value="AAL00114.1"/>
    <property type="molecule type" value="Genomic_DNA"/>
</dbReference>
<dbReference type="PIR" id="E98035">
    <property type="entry name" value="E98035"/>
</dbReference>
<dbReference type="RefSeq" id="NP_358903.1">
    <property type="nucleotide sequence ID" value="NC_003098.1"/>
</dbReference>
<dbReference type="RefSeq" id="WP_001272961.1">
    <property type="nucleotide sequence ID" value="NC_003098.1"/>
</dbReference>
<dbReference type="PDB" id="2AI7">
    <property type="method" value="X-ray"/>
    <property type="resolution" value="2.00 A"/>
    <property type="chains" value="A=1-202"/>
</dbReference>
<dbReference type="PDB" id="2AIA">
    <property type="method" value="X-ray"/>
    <property type="resolution" value="1.70 A"/>
    <property type="chains" value="A=1-202"/>
</dbReference>
<dbReference type="PDB" id="2AIE">
    <property type="method" value="X-ray"/>
    <property type="resolution" value="1.70 A"/>
    <property type="chains" value="P=1-202"/>
</dbReference>
<dbReference type="PDB" id="3SVJ">
    <property type="method" value="X-ray"/>
    <property type="resolution" value="1.55 A"/>
    <property type="chains" value="P=1-203"/>
</dbReference>
<dbReference type="PDB" id="4EOX">
    <property type="method" value="X-ray"/>
    <property type="resolution" value="1.78 A"/>
    <property type="chains" value="P=1-203"/>
</dbReference>
<dbReference type="PDB" id="6OW2">
    <property type="method" value="X-ray"/>
    <property type="resolution" value="1.70 A"/>
    <property type="chains" value="P=2-203"/>
</dbReference>
<dbReference type="PDB" id="6OW7">
    <property type="method" value="X-ray"/>
    <property type="resolution" value="1.45 A"/>
    <property type="chains" value="P/Q=2-203"/>
</dbReference>
<dbReference type="PDBsum" id="2AI7"/>
<dbReference type="PDBsum" id="2AIA"/>
<dbReference type="PDBsum" id="2AIE"/>
<dbReference type="PDBsum" id="3SVJ"/>
<dbReference type="PDBsum" id="4EOX"/>
<dbReference type="PDBsum" id="6OW2"/>
<dbReference type="PDBsum" id="6OW7"/>
<dbReference type="SMR" id="Q8DP79"/>
<dbReference type="STRING" id="171101.spr1310"/>
<dbReference type="BindingDB" id="Q8DP79"/>
<dbReference type="DrugBank" id="DB08524">
    <property type="generic name" value="2-(3-BENZOYLPHENOXY)ETHYL(HYDROXY)FORMAMIDE"/>
</dbReference>
<dbReference type="DrugBank" id="DB08523">
    <property type="generic name" value="[HYDROXY(3-PHENYLPROPYL)AMINO]METHANOL"/>
</dbReference>
<dbReference type="DrugBank" id="DB08525">
    <property type="generic name" value="HYDROXY[3-(6-METHYLPYRIDIN-2-YL)PROPYL]FORMAMIDE"/>
</dbReference>
<dbReference type="GeneID" id="45218269"/>
<dbReference type="KEGG" id="spr:spr1310"/>
<dbReference type="PATRIC" id="fig|171101.6.peg.1422"/>
<dbReference type="eggNOG" id="COG0242">
    <property type="taxonomic scope" value="Bacteria"/>
</dbReference>
<dbReference type="HOGENOM" id="CLU_061901_4_0_9"/>
<dbReference type="EvolutionaryTrace" id="Q8DP79"/>
<dbReference type="PRO" id="PR:Q8DP79"/>
<dbReference type="Proteomes" id="UP000000586">
    <property type="component" value="Chromosome"/>
</dbReference>
<dbReference type="GO" id="GO:0046872">
    <property type="term" value="F:metal ion binding"/>
    <property type="evidence" value="ECO:0007669"/>
    <property type="project" value="UniProtKB-KW"/>
</dbReference>
<dbReference type="GO" id="GO:0042586">
    <property type="term" value="F:peptide deformylase activity"/>
    <property type="evidence" value="ECO:0000318"/>
    <property type="project" value="GO_Central"/>
</dbReference>
<dbReference type="GO" id="GO:0043686">
    <property type="term" value="P:co-translational protein modification"/>
    <property type="evidence" value="ECO:0000318"/>
    <property type="project" value="GO_Central"/>
</dbReference>
<dbReference type="GO" id="GO:0006412">
    <property type="term" value="P:translation"/>
    <property type="evidence" value="ECO:0007669"/>
    <property type="project" value="UniProtKB-UniRule"/>
</dbReference>
<dbReference type="CDD" id="cd00487">
    <property type="entry name" value="Pep_deformylase"/>
    <property type="match status" value="1"/>
</dbReference>
<dbReference type="FunFam" id="3.90.45.10:FF:000002">
    <property type="entry name" value="Peptide deformylase"/>
    <property type="match status" value="1"/>
</dbReference>
<dbReference type="Gene3D" id="3.90.45.10">
    <property type="entry name" value="Peptide deformylase"/>
    <property type="match status" value="1"/>
</dbReference>
<dbReference type="HAMAP" id="MF_00163">
    <property type="entry name" value="Pep_deformylase"/>
    <property type="match status" value="1"/>
</dbReference>
<dbReference type="InterPro" id="IPR023635">
    <property type="entry name" value="Peptide_deformylase"/>
</dbReference>
<dbReference type="InterPro" id="IPR036821">
    <property type="entry name" value="Peptide_deformylase_sf"/>
</dbReference>
<dbReference type="NCBIfam" id="TIGR00079">
    <property type="entry name" value="pept_deformyl"/>
    <property type="match status" value="1"/>
</dbReference>
<dbReference type="PANTHER" id="PTHR10458">
    <property type="entry name" value="PEPTIDE DEFORMYLASE"/>
    <property type="match status" value="1"/>
</dbReference>
<dbReference type="PANTHER" id="PTHR10458:SF8">
    <property type="entry name" value="PEPTIDE DEFORMYLASE 2"/>
    <property type="match status" value="1"/>
</dbReference>
<dbReference type="Pfam" id="PF01327">
    <property type="entry name" value="Pep_deformylase"/>
    <property type="match status" value="1"/>
</dbReference>
<dbReference type="PIRSF" id="PIRSF004749">
    <property type="entry name" value="Pep_def"/>
    <property type="match status" value="1"/>
</dbReference>
<dbReference type="PRINTS" id="PR01576">
    <property type="entry name" value="PDEFORMYLASE"/>
</dbReference>
<dbReference type="SUPFAM" id="SSF56420">
    <property type="entry name" value="Peptide deformylase"/>
    <property type="match status" value="1"/>
</dbReference>
<gene>
    <name evidence="1" type="primary">def</name>
    <name type="ordered locus">spr1310</name>
</gene>
<keyword id="KW-0002">3D-structure</keyword>
<keyword id="KW-0378">Hydrolase</keyword>
<keyword id="KW-0408">Iron</keyword>
<keyword id="KW-0479">Metal-binding</keyword>
<keyword id="KW-0648">Protein biosynthesis</keyword>
<keyword id="KW-1185">Reference proteome</keyword>
<organism>
    <name type="scientific">Streptococcus pneumoniae (strain ATCC BAA-255 / R6)</name>
    <dbReference type="NCBI Taxonomy" id="171101"/>
    <lineage>
        <taxon>Bacteria</taxon>
        <taxon>Bacillati</taxon>
        <taxon>Bacillota</taxon>
        <taxon>Bacilli</taxon>
        <taxon>Lactobacillales</taxon>
        <taxon>Streptococcaceae</taxon>
        <taxon>Streptococcus</taxon>
    </lineage>
</organism>
<feature type="chain" id="PRO_0000082858" description="Peptide deformylase">
    <location>
        <begin position="1"/>
        <end position="203"/>
    </location>
</feature>
<feature type="active site" evidence="1">
    <location>
        <position position="174"/>
    </location>
</feature>
<feature type="binding site" evidence="1">
    <location>
        <position position="130"/>
    </location>
    <ligand>
        <name>Fe cation</name>
        <dbReference type="ChEBI" id="CHEBI:24875"/>
    </ligand>
</feature>
<feature type="binding site" evidence="1">
    <location>
        <position position="173"/>
    </location>
    <ligand>
        <name>Fe cation</name>
        <dbReference type="ChEBI" id="CHEBI:24875"/>
    </ligand>
</feature>
<feature type="binding site" evidence="1">
    <location>
        <position position="177"/>
    </location>
    <ligand>
        <name>Fe cation</name>
        <dbReference type="ChEBI" id="CHEBI:24875"/>
    </ligand>
</feature>
<feature type="helix" evidence="3">
    <location>
        <begin position="3"/>
        <end position="7"/>
    </location>
</feature>
<feature type="helix" evidence="3">
    <location>
        <begin position="16"/>
        <end position="18"/>
    </location>
</feature>
<feature type="helix" evidence="3">
    <location>
        <begin position="25"/>
        <end position="28"/>
    </location>
</feature>
<feature type="helix" evidence="3">
    <location>
        <begin position="40"/>
        <end position="57"/>
    </location>
</feature>
<feature type="helix" evidence="3">
    <location>
        <begin position="59"/>
        <end position="65"/>
    </location>
</feature>
<feature type="strand" evidence="3">
    <location>
        <begin position="71"/>
        <end position="74"/>
    </location>
</feature>
<feature type="helix" evidence="3">
    <location>
        <begin position="75"/>
        <end position="78"/>
    </location>
</feature>
<feature type="strand" evidence="3">
    <location>
        <begin position="82"/>
        <end position="90"/>
    </location>
</feature>
<feature type="strand" evidence="3">
    <location>
        <begin position="100"/>
        <end position="117"/>
    </location>
</feature>
<feature type="strand" evidence="3">
    <location>
        <begin position="119"/>
        <end position="124"/>
    </location>
</feature>
<feature type="strand" evidence="3">
    <location>
        <begin position="143"/>
        <end position="152"/>
    </location>
</feature>
<feature type="strand" evidence="3">
    <location>
        <begin position="158"/>
        <end position="163"/>
    </location>
</feature>
<feature type="helix" evidence="3">
    <location>
        <begin position="165"/>
        <end position="178"/>
    </location>
</feature>
<feature type="helix" evidence="3">
    <location>
        <begin position="183"/>
        <end position="186"/>
    </location>
</feature>
<feature type="strand" evidence="2">
    <location>
        <begin position="189"/>
        <end position="191"/>
    </location>
</feature>
<feature type="strand" evidence="3">
    <location>
        <begin position="199"/>
        <end position="202"/>
    </location>
</feature>
<accession>Q8DP79</accession>
<proteinExistence type="evidence at protein level"/>
<name>DEF_STRR6</name>
<reference key="1">
    <citation type="journal article" date="2001" name="J. Bacteriol.">
        <title>Genome of the bacterium Streptococcus pneumoniae strain R6.</title>
        <authorList>
            <person name="Hoskins J."/>
            <person name="Alborn W.E. Jr."/>
            <person name="Arnold J."/>
            <person name="Blaszczak L.C."/>
            <person name="Burgett S."/>
            <person name="DeHoff B.S."/>
            <person name="Estrem S.T."/>
            <person name="Fritz L."/>
            <person name="Fu D.-J."/>
            <person name="Fuller W."/>
            <person name="Geringer C."/>
            <person name="Gilmour R."/>
            <person name="Glass J.S."/>
            <person name="Khoja H."/>
            <person name="Kraft A.R."/>
            <person name="Lagace R.E."/>
            <person name="LeBlanc D.J."/>
            <person name="Lee L.N."/>
            <person name="Lefkowitz E.J."/>
            <person name="Lu J."/>
            <person name="Matsushima P."/>
            <person name="McAhren S.M."/>
            <person name="McHenney M."/>
            <person name="McLeaster K."/>
            <person name="Mundy C.W."/>
            <person name="Nicas T.I."/>
            <person name="Norris F.H."/>
            <person name="O'Gara M."/>
            <person name="Peery R.B."/>
            <person name="Robertson G.T."/>
            <person name="Rockey P."/>
            <person name="Sun P.-M."/>
            <person name="Winkler M.E."/>
            <person name="Yang Y."/>
            <person name="Young-Bellido M."/>
            <person name="Zhao G."/>
            <person name="Zook C.A."/>
            <person name="Baltz R.H."/>
            <person name="Jaskunas S.R."/>
            <person name="Rosteck P.R. Jr."/>
            <person name="Skatrud P.L."/>
            <person name="Glass J.I."/>
        </authorList>
    </citation>
    <scope>NUCLEOTIDE SEQUENCE [LARGE SCALE GENOMIC DNA]</scope>
    <source>
        <strain>ATCC BAA-255 / R6</strain>
    </source>
</reference>
<comment type="function">
    <text evidence="1">Removes the formyl group from the N-terminal Met of newly synthesized proteins. Requires at least a dipeptide for an efficient rate of reaction. N-terminal L-methionine is a prerequisite for activity but the enzyme has broad specificity at other positions.</text>
</comment>
<comment type="catalytic activity">
    <reaction evidence="1">
        <text>N-terminal N-formyl-L-methionyl-[peptide] + H2O = N-terminal L-methionyl-[peptide] + formate</text>
        <dbReference type="Rhea" id="RHEA:24420"/>
        <dbReference type="Rhea" id="RHEA-COMP:10639"/>
        <dbReference type="Rhea" id="RHEA-COMP:10640"/>
        <dbReference type="ChEBI" id="CHEBI:15377"/>
        <dbReference type="ChEBI" id="CHEBI:15740"/>
        <dbReference type="ChEBI" id="CHEBI:49298"/>
        <dbReference type="ChEBI" id="CHEBI:64731"/>
        <dbReference type="EC" id="3.5.1.88"/>
    </reaction>
</comment>
<comment type="cofactor">
    <cofactor evidence="1">
        <name>Fe(2+)</name>
        <dbReference type="ChEBI" id="CHEBI:29033"/>
    </cofactor>
    <text evidence="1">Binds 1 Fe(2+) ion.</text>
</comment>
<comment type="similarity">
    <text evidence="1">Belongs to the polypeptide deformylase family.</text>
</comment>
<protein>
    <recommendedName>
        <fullName evidence="1">Peptide deformylase</fullName>
        <shortName evidence="1">PDF</shortName>
        <ecNumber evidence="1">3.5.1.88</ecNumber>
    </recommendedName>
    <alternativeName>
        <fullName evidence="1">Polypeptide deformylase</fullName>
    </alternativeName>
</protein>
<sequence>MSAIERITKAAHLIDMNDIIREGNPTLRTVAEEVTFPLSDQEIILGEKMMQFLKHSQDPVMAEKMGLRGGVGLAAPQLDISKRIIAVLVPNIVEEGETPQEAYDLEAIMYNPKIVSHSVQDAALGEGEGCLSVDRNVPGYVVRHARVTVDYFDKDGEKHRIKLKGYNSIVVQHEIDHINGIMFYDRINEKDPFAVKDGLLILE</sequence>
<evidence type="ECO:0000255" key="1">
    <source>
        <dbReference type="HAMAP-Rule" id="MF_00163"/>
    </source>
</evidence>
<evidence type="ECO:0007829" key="2">
    <source>
        <dbReference type="PDB" id="4EOX"/>
    </source>
</evidence>
<evidence type="ECO:0007829" key="3">
    <source>
        <dbReference type="PDB" id="6OW7"/>
    </source>
</evidence>